<name>DRTS_PARTE</name>
<gene>
    <name type="ORF">GSPATT00019973001</name>
</gene>
<accession>Q27828</accession>
<accession>A0DTB3</accession>
<dbReference type="EC" id="1.5.1.3"/>
<dbReference type="EC" id="2.1.1.45"/>
<dbReference type="EMBL" id="U03885">
    <property type="protein sequence ID" value="AAC47025.1"/>
    <property type="molecule type" value="Genomic_DNA"/>
</dbReference>
<dbReference type="EMBL" id="CT868563">
    <property type="protein sequence ID" value="CAK86280.1"/>
    <property type="molecule type" value="Genomic_DNA"/>
</dbReference>
<dbReference type="PIR" id="S65570">
    <property type="entry name" value="S65570"/>
</dbReference>
<dbReference type="RefSeq" id="XP_001453677.1">
    <property type="nucleotide sequence ID" value="XM_001453640.1"/>
</dbReference>
<dbReference type="SMR" id="Q27828"/>
<dbReference type="FunCoup" id="Q27828">
    <property type="interactions" value="99"/>
</dbReference>
<dbReference type="STRING" id="5888.Q27828"/>
<dbReference type="EnsemblProtists" id="CAK86280">
    <property type="protein sequence ID" value="CAK86280"/>
    <property type="gene ID" value="GSPATT00019973001"/>
</dbReference>
<dbReference type="GeneID" id="5039462"/>
<dbReference type="KEGG" id="ptm:GSPATT00019973001"/>
<dbReference type="eggNOG" id="KOG0673">
    <property type="taxonomic scope" value="Eukaryota"/>
</dbReference>
<dbReference type="eggNOG" id="KOG1324">
    <property type="taxonomic scope" value="Eukaryota"/>
</dbReference>
<dbReference type="HOGENOM" id="CLU_021669_2_2_1"/>
<dbReference type="InParanoid" id="Q27828"/>
<dbReference type="OMA" id="ENQYLDM"/>
<dbReference type="OrthoDB" id="766at2759"/>
<dbReference type="UniPathway" id="UPA00077">
    <property type="reaction ID" value="UER00158"/>
</dbReference>
<dbReference type="Proteomes" id="UP000000600">
    <property type="component" value="Partially assembled WGS sequence"/>
</dbReference>
<dbReference type="GO" id="GO:0005829">
    <property type="term" value="C:cytosol"/>
    <property type="evidence" value="ECO:0000318"/>
    <property type="project" value="GO_Central"/>
</dbReference>
<dbReference type="GO" id="GO:0005739">
    <property type="term" value="C:mitochondrion"/>
    <property type="evidence" value="ECO:0000318"/>
    <property type="project" value="GO_Central"/>
</dbReference>
<dbReference type="GO" id="GO:0004146">
    <property type="term" value="F:dihydrofolate reductase activity"/>
    <property type="evidence" value="ECO:0007669"/>
    <property type="project" value="UniProtKB-EC"/>
</dbReference>
<dbReference type="GO" id="GO:0004799">
    <property type="term" value="F:thymidylate synthase activity"/>
    <property type="evidence" value="ECO:0000318"/>
    <property type="project" value="GO_Central"/>
</dbReference>
<dbReference type="GO" id="GO:0006231">
    <property type="term" value="P:dTMP biosynthetic process"/>
    <property type="evidence" value="ECO:0000318"/>
    <property type="project" value="GO_Central"/>
</dbReference>
<dbReference type="GO" id="GO:0032259">
    <property type="term" value="P:methylation"/>
    <property type="evidence" value="ECO:0007669"/>
    <property type="project" value="UniProtKB-KW"/>
</dbReference>
<dbReference type="GO" id="GO:0006730">
    <property type="term" value="P:one-carbon metabolic process"/>
    <property type="evidence" value="ECO:0007669"/>
    <property type="project" value="UniProtKB-KW"/>
</dbReference>
<dbReference type="GO" id="GO:0046654">
    <property type="term" value="P:tetrahydrofolate biosynthetic process"/>
    <property type="evidence" value="ECO:0007669"/>
    <property type="project" value="UniProtKB-UniPathway"/>
</dbReference>
<dbReference type="CDD" id="cd00209">
    <property type="entry name" value="DHFR"/>
    <property type="match status" value="1"/>
</dbReference>
<dbReference type="CDD" id="cd00351">
    <property type="entry name" value="TS_Pyrimidine_HMase"/>
    <property type="match status" value="1"/>
</dbReference>
<dbReference type="FunFam" id="3.30.572.10:FF:000002">
    <property type="entry name" value="Possible thymidylate synthase"/>
    <property type="match status" value="1"/>
</dbReference>
<dbReference type="Gene3D" id="3.40.430.10">
    <property type="entry name" value="Dihydrofolate Reductase, subunit A"/>
    <property type="match status" value="1"/>
</dbReference>
<dbReference type="Gene3D" id="3.30.572.10">
    <property type="entry name" value="Thymidylate synthase/dCMP hydroxymethylase domain"/>
    <property type="match status" value="1"/>
</dbReference>
<dbReference type="HAMAP" id="MF_00008">
    <property type="entry name" value="Thymidy_synth_bact"/>
    <property type="match status" value="1"/>
</dbReference>
<dbReference type="InterPro" id="IPR024072">
    <property type="entry name" value="DHFR-like_dom_sf"/>
</dbReference>
<dbReference type="InterPro" id="IPR012262">
    <property type="entry name" value="DHFR-TS"/>
</dbReference>
<dbReference type="InterPro" id="IPR017925">
    <property type="entry name" value="DHFR_CS"/>
</dbReference>
<dbReference type="InterPro" id="IPR001796">
    <property type="entry name" value="DHFR_dom"/>
</dbReference>
<dbReference type="InterPro" id="IPR045097">
    <property type="entry name" value="Thymidate_synth/dCMP_Mease"/>
</dbReference>
<dbReference type="InterPro" id="IPR023451">
    <property type="entry name" value="Thymidate_synth/dCMP_Mease_dom"/>
</dbReference>
<dbReference type="InterPro" id="IPR036926">
    <property type="entry name" value="Thymidate_synth/dCMP_Mease_sf"/>
</dbReference>
<dbReference type="InterPro" id="IPR000398">
    <property type="entry name" value="Thymidylate_synthase"/>
</dbReference>
<dbReference type="InterPro" id="IPR020940">
    <property type="entry name" value="Thymidylate_synthase_AS"/>
</dbReference>
<dbReference type="NCBIfam" id="NF002497">
    <property type="entry name" value="PRK01827.1-3"/>
    <property type="match status" value="1"/>
</dbReference>
<dbReference type="NCBIfam" id="TIGR03284">
    <property type="entry name" value="thym_sym"/>
    <property type="match status" value="1"/>
</dbReference>
<dbReference type="PANTHER" id="PTHR11548:SF2">
    <property type="entry name" value="THYMIDYLATE SYNTHASE"/>
    <property type="match status" value="1"/>
</dbReference>
<dbReference type="PANTHER" id="PTHR11548">
    <property type="entry name" value="THYMIDYLATE SYNTHASE 1"/>
    <property type="match status" value="1"/>
</dbReference>
<dbReference type="Pfam" id="PF00186">
    <property type="entry name" value="DHFR_1"/>
    <property type="match status" value="1"/>
</dbReference>
<dbReference type="Pfam" id="PF00303">
    <property type="entry name" value="Thymidylat_synt"/>
    <property type="match status" value="1"/>
</dbReference>
<dbReference type="PIRSF" id="PIRSF000389">
    <property type="entry name" value="DHFR-TS"/>
    <property type="match status" value="1"/>
</dbReference>
<dbReference type="PRINTS" id="PR00108">
    <property type="entry name" value="THYMDSNTHASE"/>
</dbReference>
<dbReference type="SUPFAM" id="SSF53597">
    <property type="entry name" value="Dihydrofolate reductase-like"/>
    <property type="match status" value="1"/>
</dbReference>
<dbReference type="SUPFAM" id="SSF55831">
    <property type="entry name" value="Thymidylate synthase/dCMP hydroxymethylase"/>
    <property type="match status" value="1"/>
</dbReference>
<dbReference type="PROSITE" id="PS00075">
    <property type="entry name" value="DHFR_1"/>
    <property type="match status" value="1"/>
</dbReference>
<dbReference type="PROSITE" id="PS51330">
    <property type="entry name" value="DHFR_2"/>
    <property type="match status" value="1"/>
</dbReference>
<dbReference type="PROSITE" id="PS00091">
    <property type="entry name" value="THYMIDYLATE_SYNTHASE"/>
    <property type="match status" value="1"/>
</dbReference>
<feature type="chain" id="PRO_0000186346" description="Bifunctional dihydrofolate reductase-thymidylate synthase">
    <location>
        <begin position="1"/>
        <end position="462"/>
    </location>
</feature>
<feature type="domain" description="DHFR">
    <location>
        <begin position="6"/>
        <end position="165"/>
    </location>
</feature>
<feature type="region of interest" description="Thymidylate synthase">
    <location>
        <begin position="180"/>
        <end position="462"/>
    </location>
</feature>
<feature type="active site" evidence="1">
    <location>
        <position position="345"/>
    </location>
</feature>
<feature type="binding site" evidence="1">
    <location>
        <position position="10"/>
    </location>
    <ligand>
        <name>substrate</name>
    </ligand>
</feature>
<feature type="binding site" evidence="1">
    <location>
        <position position="12"/>
    </location>
    <ligand>
        <name>NADP(+)</name>
        <dbReference type="ChEBI" id="CHEBI:58349"/>
    </ligand>
</feature>
<feature type="binding site" evidence="1">
    <location>
        <begin position="18"/>
        <end position="24"/>
    </location>
    <ligand>
        <name>NADP(+)</name>
        <dbReference type="ChEBI" id="CHEBI:58349"/>
    </ligand>
</feature>
<feature type="binding site" evidence="1">
    <location>
        <position position="32"/>
    </location>
    <ligand>
        <name>substrate</name>
    </ligand>
</feature>
<feature type="binding site" evidence="1">
    <location>
        <begin position="49"/>
        <end position="51"/>
    </location>
    <ligand>
        <name>NADP(+)</name>
        <dbReference type="ChEBI" id="CHEBI:58349"/>
    </ligand>
</feature>
<feature type="binding site" evidence="1">
    <location>
        <begin position="68"/>
        <end position="71"/>
    </location>
    <ligand>
        <name>NADP(+)</name>
        <dbReference type="ChEBI" id="CHEBI:58349"/>
    </ligand>
</feature>
<feature type="binding site" evidence="1">
    <location>
        <position position="101"/>
    </location>
    <ligand>
        <name>substrate</name>
    </ligand>
</feature>
<feature type="binding site" evidence="1">
    <location>
        <begin position="102"/>
        <end position="109"/>
    </location>
    <ligand>
        <name>NADP(+)</name>
        <dbReference type="ChEBI" id="CHEBI:58349"/>
    </ligand>
</feature>
<feature type="binding site" evidence="1">
    <location>
        <position position="122"/>
    </location>
    <ligand>
        <name>substrate</name>
    </ligand>
</feature>
<feature type="binding site" evidence="1">
    <location>
        <position position="200"/>
    </location>
    <ligand>
        <name>dUMP</name>
        <dbReference type="ChEBI" id="CHEBI:246422"/>
    </ligand>
</feature>
<feature type="binding site" evidence="1">
    <location>
        <position position="346"/>
    </location>
    <ligand>
        <name>dUMP</name>
        <dbReference type="ChEBI" id="CHEBI:246422"/>
    </ligand>
</feature>
<feature type="binding site" evidence="1">
    <location>
        <begin position="364"/>
        <end position="368"/>
    </location>
    <ligand>
        <name>dUMP</name>
        <dbReference type="ChEBI" id="CHEBI:246422"/>
    </ligand>
</feature>
<feature type="binding site" evidence="1">
    <location>
        <position position="376"/>
    </location>
    <ligand>
        <name>dUMP</name>
        <dbReference type="ChEBI" id="CHEBI:246422"/>
    </ligand>
</feature>
<feature type="binding site" evidence="1">
    <location>
        <begin position="406"/>
        <end position="408"/>
    </location>
    <ligand>
        <name>dUMP</name>
        <dbReference type="ChEBI" id="CHEBI:246422"/>
    </ligand>
</feature>
<evidence type="ECO:0000250" key="1"/>
<evidence type="ECO:0000305" key="2"/>
<proteinExistence type="inferred from homology"/>
<organism>
    <name type="scientific">Paramecium tetraurelia</name>
    <dbReference type="NCBI Taxonomy" id="5888"/>
    <lineage>
        <taxon>Eukaryota</taxon>
        <taxon>Sar</taxon>
        <taxon>Alveolata</taxon>
        <taxon>Ciliophora</taxon>
        <taxon>Intramacronucleata</taxon>
        <taxon>Oligohymenophorea</taxon>
        <taxon>Peniculida</taxon>
        <taxon>Parameciidae</taxon>
        <taxon>Paramecium</taxon>
    </lineage>
</organism>
<keyword id="KW-0489">Methyltransferase</keyword>
<keyword id="KW-0511">Multifunctional enzyme</keyword>
<keyword id="KW-0521">NADP</keyword>
<keyword id="KW-0545">Nucleotide biosynthesis</keyword>
<keyword id="KW-0554">One-carbon metabolism</keyword>
<keyword id="KW-0560">Oxidoreductase</keyword>
<keyword id="KW-1185">Reference proteome</keyword>
<keyword id="KW-0808">Transferase</keyword>
<reference key="1">
    <citation type="journal article" date="1996" name="Mol. Gen. Genet.">
        <title>Cloning and molecular analysis of the bifunctional dihydrofolate reductase-thymidylate synthase gene in the ciliated protozoan Paramecium tetraurelia.</title>
        <authorList>
            <person name="Schlichtherle I.M."/>
            <person name="van Houten J.L."/>
            <person name="Roos D.S."/>
        </authorList>
    </citation>
    <scope>NUCLEOTIDE SEQUENCE [GENOMIC DNA]</scope>
    <source>
        <strain>Stock 51</strain>
    </source>
</reference>
<reference key="2">
    <citation type="journal article" date="2006" name="Nature">
        <title>Global trends of whole-genome duplications revealed by the ciliate Paramecium tetraurelia.</title>
        <authorList>
            <person name="Aury J.-M."/>
            <person name="Jaillon O."/>
            <person name="Duret L."/>
            <person name="Noel B."/>
            <person name="Jubin C."/>
            <person name="Porcel B.M."/>
            <person name="Segurens B."/>
            <person name="Daubin V."/>
            <person name="Anthouard V."/>
            <person name="Aiach N."/>
            <person name="Arnaiz O."/>
            <person name="Billaut A."/>
            <person name="Beisson J."/>
            <person name="Blanc I."/>
            <person name="Bouhouche K."/>
            <person name="Camara F."/>
            <person name="Duharcourt S."/>
            <person name="Guigo R."/>
            <person name="Gogendeau D."/>
            <person name="Katinka M."/>
            <person name="Keller A.-M."/>
            <person name="Kissmehl R."/>
            <person name="Klotz C."/>
            <person name="Koll F."/>
            <person name="Le Mouel A."/>
            <person name="Lepere G."/>
            <person name="Malinsky S."/>
            <person name="Nowacki M."/>
            <person name="Nowak J.K."/>
            <person name="Plattner H."/>
            <person name="Poulain J."/>
            <person name="Ruiz F."/>
            <person name="Serrano V."/>
            <person name="Zagulski M."/>
            <person name="Dessen P."/>
            <person name="Betermier M."/>
            <person name="Weissenbach J."/>
            <person name="Scarpelli C."/>
            <person name="Schaechter V."/>
            <person name="Sperling L."/>
            <person name="Meyer E."/>
            <person name="Cohen J."/>
            <person name="Wincker P."/>
        </authorList>
    </citation>
    <scope>NUCLEOTIDE SEQUENCE [LARGE SCALE GENOMIC DNA]</scope>
    <source>
        <strain>Stock d4-2</strain>
    </source>
</reference>
<sequence length="462" mass="53201">MTTNKTFSMVLAMTLNGGIGYQNRLPWKLKEDLQRFKKITTGGIVIMGRKTFESMNSKPLPNRVNVVISKNMKSSNEVQVFPRIEDALQFYNTSHQKLYLIGGKRIFEEGLATDKCSDVHLTRIGVETKCDVYLNKNIFSTFQVNKTSQTKSENGINYDYQHLINKNSHEQSYIDEEHQENQYLDMITKIMKEGVSKDDRTGVGTMSIFGQTMRFNLAQSFPLLTTKKVFFRGVVEELLWFLRGNTNGKLLLDKGVKIWEGNGTREYLDTIGLQHRQEHDLGPVYGFQWRHFGAKYKDCQTDYSNQGVDQVKEIIQLLKNNPDSRRIILSAWNPIDLKQMALPPCHVMSQFFVANGKLSCMMYQRSCDFGLGIPFNIASYALLTYMLAKECNLNLGEFVHVLGDTHIYSNHVEALKKQIERVPYPFPLLKIKGNKSLFDYTYEDFELVGYNAHDKIEMKMAV</sequence>
<comment type="function">
    <text evidence="1">Bifunctional enzyme. Involved in de novo dTMP biosynthesis. Key enzyme in folate metabolism. Catalyzes an essential reaction for de novo glycine and purine synthesis, DNA precursor synthesis, and for the conversion of dUMP to dTMP (By similarity).</text>
</comment>
<comment type="catalytic activity">
    <reaction>
        <text>(6S)-5,6,7,8-tetrahydrofolate + NADP(+) = 7,8-dihydrofolate + NADPH + H(+)</text>
        <dbReference type="Rhea" id="RHEA:15009"/>
        <dbReference type="ChEBI" id="CHEBI:15378"/>
        <dbReference type="ChEBI" id="CHEBI:57451"/>
        <dbReference type="ChEBI" id="CHEBI:57453"/>
        <dbReference type="ChEBI" id="CHEBI:57783"/>
        <dbReference type="ChEBI" id="CHEBI:58349"/>
        <dbReference type="EC" id="1.5.1.3"/>
    </reaction>
</comment>
<comment type="catalytic activity">
    <reaction>
        <text>dUMP + (6R)-5,10-methylene-5,6,7,8-tetrahydrofolate = 7,8-dihydrofolate + dTMP</text>
        <dbReference type="Rhea" id="RHEA:12104"/>
        <dbReference type="ChEBI" id="CHEBI:15636"/>
        <dbReference type="ChEBI" id="CHEBI:57451"/>
        <dbReference type="ChEBI" id="CHEBI:63528"/>
        <dbReference type="ChEBI" id="CHEBI:246422"/>
        <dbReference type="EC" id="2.1.1.45"/>
    </reaction>
</comment>
<comment type="pathway">
    <text>Cofactor biosynthesis; tetrahydrofolate biosynthesis; 5,6,7,8-tetrahydrofolate from 7,8-dihydrofolate: step 1/1.</text>
</comment>
<comment type="similarity">
    <text evidence="2">In the N-terminal section; belongs to the dihydrofolate reductase family.</text>
</comment>
<comment type="similarity">
    <text evidence="2">In the C-terminal section; belongs to the thymidylate synthase family.</text>
</comment>
<protein>
    <recommendedName>
        <fullName>Bifunctional dihydrofolate reductase-thymidylate synthase</fullName>
        <shortName>DHFR-TS</shortName>
    </recommendedName>
    <domain>
        <recommendedName>
            <fullName>Dihydrofolate reductase</fullName>
            <ecNumber>1.5.1.3</ecNumber>
        </recommendedName>
    </domain>
    <domain>
        <recommendedName>
            <fullName>Thymidylate synthase</fullName>
            <ecNumber>2.1.1.45</ecNumber>
        </recommendedName>
    </domain>
</protein>